<protein>
    <recommendedName>
        <fullName>Ankyrin repeat protein OPG025</fullName>
    </recommendedName>
</protein>
<name>PG025_MONPV</name>
<feature type="chain" id="PRO_0000457192" description="Ankyrin repeat protein OPG025">
    <location>
        <begin position="1"/>
        <end position="630"/>
    </location>
</feature>
<feature type="repeat" description="ANK 1" evidence="2">
    <location>
        <begin position="36"/>
        <end position="69"/>
    </location>
</feature>
<feature type="repeat" description="ANK 2" evidence="2">
    <location>
        <begin position="70"/>
        <end position="100"/>
    </location>
</feature>
<feature type="repeat" description="ANK 3" evidence="2">
    <location>
        <begin position="103"/>
        <end position="134"/>
    </location>
</feature>
<feature type="repeat" description="ANK 4" evidence="2">
    <location>
        <begin position="174"/>
        <end position="210"/>
    </location>
</feature>
<feature type="repeat" description="ANK 5" evidence="2">
    <location>
        <begin position="338"/>
        <end position="367"/>
    </location>
</feature>
<feature type="repeat" description="ANK 6" evidence="2">
    <location>
        <begin position="408"/>
        <end position="437"/>
    </location>
</feature>
<proteinExistence type="inferred from homology"/>
<organism evidence="4 5">
    <name type="scientific">Monkeypox virus</name>
    <dbReference type="NCBI Taxonomy" id="10244"/>
    <lineage>
        <taxon>Viruses</taxon>
        <taxon>Varidnaviria</taxon>
        <taxon>Bamfordvirae</taxon>
        <taxon>Nucleocytoviricota</taxon>
        <taxon>Pokkesviricetes</taxon>
        <taxon>Chitovirales</taxon>
        <taxon>Poxviridae</taxon>
        <taxon>Chordopoxvirinae</taxon>
        <taxon>Orthopoxvirus</taxon>
    </lineage>
</organism>
<comment type="function">
    <text evidence="1">Plays a role in the inhibition of host immune repsonse by counteracting the action of interferons on early events in the viral replication cycle.</text>
</comment>
<comment type="subunit">
    <text evidence="1">Interacts with components of host SCF complex CUL1 and SKP1 and components of the cullin deneddylation/COP9 signalosome complex subunits COPS7A and COPS7B.</text>
</comment>
<comment type="induction">
    <text evidence="1">Expressed in the early phase of the viral replicative cycle.</text>
</comment>
<comment type="similarity">
    <text evidence="3">Belongs to the orthopoxvirus OPG025 family.</text>
</comment>
<gene>
    <name type="primary">OPG025</name>
    <name type="ORF">MPXVgp012</name>
</gene>
<accession>A0A7H0DN01</accession>
<sequence>MVNDKILYDSCKTFNIDASSAQSLIESGANPLYEYDGETPLKAYVTKKNNNIKNDVVILLLSSVDYKNINDFDIFEYLCSDNIDIDLLKLLISKGIEINSIKNGINIVEKYATTSNPNIDVFKLLLDKGIPTCSNIQYGYNIIPIQCTDYIYFNWDDEFDYLDYDYTTDYDNRMGKTVLYYYIITRSQDGYVTSLDVINYLISHENEMCHYTYRERTILYYYVDKCDIKREIFDVLFDSNYSGNELMHILSIYLRKQYRKKNHKIDNYIVDKLLSAHDTFYILELCNSLRNNVIISSILKRYTDSIQDLLSEYVSYHTVYINVIKCMIREGAILYRFKHINKYFKRFDNRDPKVVEYILKNGNVVVNDDNIINIMPLFPTLFIHESEVLSILEICKPYIDDINKIDKHGRSILYYCIESHSVALIEWLIDNGADINITTTYGSTCIGICVIMAHACIPEIAEIYIKILEIILSKLPTIECIKKTVDYLSNDRHLLIGNKAKSLLKICIKYFILVDYKYICDTYPSYIEYITDCEKEIADMCQIKINGTDMLTVMYKLNKPTKKRYVNNPIFTDWANKQYKFYNQIIYNANRLIEQSKKIDNMIDEVSADNNRLSTLPLELRHLIFSYAFL</sequence>
<evidence type="ECO:0000250" key="1">
    <source>
        <dbReference type="UniProtKB" id="P17372"/>
    </source>
</evidence>
<evidence type="ECO:0000255" key="2"/>
<evidence type="ECO:0000305" key="3"/>
<evidence type="ECO:0000312" key="4">
    <source>
        <dbReference type="EMBL" id="QNP12884.1"/>
    </source>
</evidence>
<evidence type="ECO:0000312" key="5">
    <source>
        <dbReference type="Proteomes" id="UP000516359"/>
    </source>
</evidence>
<keyword id="KW-0040">ANK repeat</keyword>
<keyword id="KW-0244">Early protein</keyword>
<keyword id="KW-0945">Host-virus interaction</keyword>
<keyword id="KW-1090">Inhibition of host innate immune response by virus</keyword>
<keyword id="KW-1185">Reference proteome</keyword>
<keyword id="KW-0677">Repeat</keyword>
<keyword id="KW-0899">Viral immunoevasion</keyword>
<reference key="1">
    <citation type="journal article" date="2022" name="J. Infect. Dis.">
        <title>Exportation of Monkeypox virus from the African continent.</title>
        <authorList>
            <person name="Mauldin M.R."/>
            <person name="McCollum A.M."/>
            <person name="Nakazawa Y.J."/>
            <person name="Mandra A."/>
            <person name="Whitehouse E.R."/>
            <person name="Davidson W."/>
            <person name="Zhao H."/>
            <person name="Gao J."/>
            <person name="Li Y."/>
            <person name="Doty J."/>
            <person name="Yinka-Ogunleye A."/>
            <person name="Akinpelu A."/>
            <person name="Aruna O."/>
            <person name="Naidoo D."/>
            <person name="Lewandowski K."/>
            <person name="Afrough B."/>
            <person name="Graham V."/>
            <person name="Aarons E."/>
            <person name="Hewson R."/>
            <person name="Vipond R."/>
            <person name="Dunning J."/>
            <person name="Chand M."/>
            <person name="Brown C."/>
            <person name="Cohen-Gihon I."/>
            <person name="Erez N."/>
            <person name="Shifman O."/>
            <person name="Israeli O."/>
            <person name="Sharon M."/>
            <person name="Schwartz E."/>
            <person name="Beth-Din A."/>
            <person name="Zvi A."/>
            <person name="Mak T.M."/>
            <person name="Ng Y.K."/>
            <person name="Cui L."/>
            <person name="Lin R.T.P."/>
            <person name="Olson V.A."/>
            <person name="Brooks T."/>
            <person name="Paran N."/>
            <person name="Ihekweazu C."/>
            <person name="Reynolds M.G."/>
        </authorList>
    </citation>
    <scope>NUCLEOTIDE SEQUENCE [LARGE SCALE GENOMIC DNA]</scope>
    <source>
        <strain>MPXV-M5312_HM12_Rivers</strain>
    </source>
</reference>
<dbReference type="EMBL" id="MT903340">
    <property type="protein sequence ID" value="QNP12884.1"/>
    <property type="molecule type" value="Genomic_DNA"/>
</dbReference>
<dbReference type="RefSeq" id="YP_010377011.1">
    <property type="nucleotide sequence ID" value="NC_063383.1"/>
</dbReference>
<dbReference type="SMR" id="A0A7H0DN01"/>
<dbReference type="GeneID" id="72551426"/>
<dbReference type="Proteomes" id="UP000516359">
    <property type="component" value="Genome"/>
</dbReference>
<dbReference type="GO" id="GO:0052170">
    <property type="term" value="P:symbiont-mediated suppression of host innate immune response"/>
    <property type="evidence" value="ECO:0007669"/>
    <property type="project" value="UniProtKB-KW"/>
</dbReference>
<dbReference type="Gene3D" id="1.25.40.20">
    <property type="entry name" value="Ankyrin repeat-containing domain"/>
    <property type="match status" value="2"/>
</dbReference>
<dbReference type="InterPro" id="IPR051637">
    <property type="entry name" value="Ank_repeat_dom-contain_49"/>
</dbReference>
<dbReference type="InterPro" id="IPR002110">
    <property type="entry name" value="Ankyrin_rpt"/>
</dbReference>
<dbReference type="InterPro" id="IPR036770">
    <property type="entry name" value="Ankyrin_rpt-contain_sf"/>
</dbReference>
<dbReference type="PANTHER" id="PTHR24180">
    <property type="entry name" value="CYCLIN-DEPENDENT KINASE INHIBITOR 2C-RELATED"/>
    <property type="match status" value="1"/>
</dbReference>
<dbReference type="PANTHER" id="PTHR24180:SF45">
    <property type="entry name" value="POLY [ADP-RIBOSE] POLYMERASE TANKYRASE"/>
    <property type="match status" value="1"/>
</dbReference>
<dbReference type="Pfam" id="PF13606">
    <property type="entry name" value="Ank_3"/>
    <property type="match status" value="1"/>
</dbReference>
<dbReference type="SMART" id="SM00248">
    <property type="entry name" value="ANK"/>
    <property type="match status" value="7"/>
</dbReference>
<dbReference type="SUPFAM" id="SSF48403">
    <property type="entry name" value="Ankyrin repeat"/>
    <property type="match status" value="1"/>
</dbReference>
<dbReference type="PROSITE" id="PS50297">
    <property type="entry name" value="ANK_REP_REGION"/>
    <property type="match status" value="1"/>
</dbReference>
<dbReference type="PROSITE" id="PS50088">
    <property type="entry name" value="ANK_REPEAT"/>
    <property type="match status" value="1"/>
</dbReference>
<organismHost>
    <name type="scientific">Cynomys gunnisoni</name>
    <name type="common">Gunnison's prairie dog</name>
    <name type="synonym">Spermophilus gunnisoni</name>
    <dbReference type="NCBI Taxonomy" id="45479"/>
</organismHost>
<organismHost>
    <name type="scientific">Cynomys leucurus</name>
    <name type="common">White-tailed prairie dog</name>
    <dbReference type="NCBI Taxonomy" id="99825"/>
</organismHost>
<organismHost>
    <name type="scientific">Cynomys ludovicianus</name>
    <name type="common">Black-tailed prairie dog</name>
    <dbReference type="NCBI Taxonomy" id="45480"/>
</organismHost>
<organismHost>
    <name type="scientific">Cynomys mexicanus</name>
    <name type="common">Mexican prairie dog</name>
    <dbReference type="NCBI Taxonomy" id="99826"/>
</organismHost>
<organismHost>
    <name type="scientific">Cynomys parvidens</name>
    <name type="common">Utah prairie dog</name>
    <dbReference type="NCBI Taxonomy" id="99827"/>
</organismHost>
<organismHost>
    <name type="scientific">Gliridae</name>
    <name type="common">dormice</name>
    <dbReference type="NCBI Taxonomy" id="30650"/>
</organismHost>
<organismHost>
    <name type="scientific">Heliosciurus ruwenzorii</name>
    <name type="common">Ruwenzori sun squirrel</name>
    <dbReference type="NCBI Taxonomy" id="226685"/>
</organismHost>
<organismHost>
    <name type="scientific">Homo sapiens</name>
    <name type="common">Human</name>
    <dbReference type="NCBI Taxonomy" id="9606"/>
</organismHost>
<organismHost>
    <name type="scientific">Mus musculus</name>
    <name type="common">Mouse</name>
    <dbReference type="NCBI Taxonomy" id="10090"/>
</organismHost>